<gene>
    <name evidence="1 4" type="primary">psbA2</name>
    <name type="synonym">psbA-2</name>
    <name type="ordered locus">tlr1844</name>
</gene>
<comment type="function">
    <text evidence="1 3">Photosystem II (PSII) is a light-driven water:plastoquinone oxidoreductase that uses light energy to abstract electrons from H(2)O, generating O(2) and a proton gradient subsequently used for ATP formation. It consists of a core antenna complex that captures photons, and an electron transfer chain that converts photonic excitation into a charge separation. The D1/D2 (PsbA/PsbD) reaction center heterodimer binds P680, the primary electron donor of PSII as well as several subsequent electron acceptors.</text>
</comment>
<comment type="catalytic activity">
    <reaction evidence="1">
        <text>2 a plastoquinone + 4 hnu + 2 H2O = 2 a plastoquinol + O2</text>
        <dbReference type="Rhea" id="RHEA:36359"/>
        <dbReference type="Rhea" id="RHEA-COMP:9561"/>
        <dbReference type="Rhea" id="RHEA-COMP:9562"/>
        <dbReference type="ChEBI" id="CHEBI:15377"/>
        <dbReference type="ChEBI" id="CHEBI:15379"/>
        <dbReference type="ChEBI" id="CHEBI:17757"/>
        <dbReference type="ChEBI" id="CHEBI:30212"/>
        <dbReference type="ChEBI" id="CHEBI:62192"/>
        <dbReference type="EC" id="1.10.3.9"/>
    </reaction>
</comment>
<comment type="cofactor">
    <text evidence="1 3">The D1/D2 heterodimer binds P680, chlorophylls that are the primary electron donor of PSII, and subsequent electron acceptors. It shares a non-heme iron and each subunit binds pheophytin, quinone, additional chlorophylls, carotenoids and lipids. D1 provides most of the ligands for the Mn4-Ca-O5 cluster of the oxygen-evolving complex (OEC). There is also a Cl(-1) ion associated with D1 and D2, which is required for oxygen evolution. The PSII complex binds additional chlorophylls, carotenoids and specific lipids.</text>
</comment>
<comment type="subunit">
    <text evidence="1 3">PSII is composed of 1 copy each of membrane proteins PsbA, PsbB, PsbC, PsbD, PsbE, PsbF, PsbH, PsbI, PsbJ, PsbK, PsbL, PsbM, PsbT, PsbX, PsbY, PsbZ, Psb30/Ycf12, peripheral proteins PsbO, CyanoQ (PsbQ), PsbU, PsbV and a large number of cofactors. It forms dimeric complexes.</text>
</comment>
<comment type="subcellular location">
    <subcellularLocation>
        <location evidence="1 3">Cellular thylakoid membrane</location>
        <topology evidence="1 3">Multi-pass membrane protein</topology>
    </subcellularLocation>
</comment>
<comment type="PTM">
    <text evidence="1">C-terminally processed by CtpA; processing is essential to allow assembly of the oxygen-evolving complex and thus photosynthetic growth.</text>
</comment>
<comment type="PTM">
    <text evidence="1">Tyr-161 forms a radical intermediate that is referred to as redox-active TyrZ, YZ or Y-Z.</text>
</comment>
<comment type="mass spectrometry">
    <text>Mass for C-terminally truncated D1. The measured protein is probably a mixture of the products of the 3 psbA genes.</text>
</comment>
<comment type="miscellaneous">
    <text evidence="1 2">Cyanobacteria usually contain more than 2 copies of the psbA gene.</text>
</comment>
<comment type="miscellaneous">
    <text evidence="1">2 of the reaction center chlorophylls (ChlD1 and ChlD2) are entirely coordinated by water.</text>
</comment>
<comment type="miscellaneous">
    <text evidence="1">Herbicides such as atrazine, BNT, diuron or ioxynil bind in the Q(B) binding site and block subsequent electron transfer.</text>
</comment>
<comment type="similarity">
    <text evidence="1">Belongs to the reaction center PufL/M/PsbA/D family.</text>
</comment>
<reference key="1">
    <citation type="journal article" date="2002" name="DNA Res.">
        <title>Complete genome structure of the thermophilic cyanobacterium Thermosynechococcus elongatus BP-1.</title>
        <authorList>
            <person name="Nakamura Y."/>
            <person name="Kaneko T."/>
            <person name="Sato S."/>
            <person name="Ikeuchi M."/>
            <person name="Katoh H."/>
            <person name="Sasamoto S."/>
            <person name="Watanabe A."/>
            <person name="Iriguchi M."/>
            <person name="Kawashima K."/>
            <person name="Kimura T."/>
            <person name="Kishida Y."/>
            <person name="Kiyokawa C."/>
            <person name="Kohara M."/>
            <person name="Matsumoto M."/>
            <person name="Matsuno A."/>
            <person name="Nakazaki N."/>
            <person name="Shimpo S."/>
            <person name="Sugimoto M."/>
            <person name="Takeuchi C."/>
            <person name="Yamada M."/>
            <person name="Tabata S."/>
        </authorList>
    </citation>
    <scope>NUCLEOTIDE SEQUENCE [LARGE SCALE GENOMIC DNA]</scope>
    <source>
        <strain>NIES-2133 / IAM M-273 / BP-1</strain>
    </source>
</reference>
<reference key="2">
    <citation type="journal article" date="2009" name="Nat. Struct. Mol. Biol.">
        <title>Cyanobacterial photosystem II at 2.9-A resolution and the role of quinones, lipids, channels and chloride.</title>
        <authorList>
            <person name="Guskov A."/>
            <person name="Kern J."/>
            <person name="Gabdulkhakov A."/>
            <person name="Broser M."/>
            <person name="Zouni A."/>
            <person name="Saenger W."/>
        </authorList>
    </citation>
    <scope>FUNCTION</scope>
    <scope>COFACTOR</scope>
    <scope>SUBUNIT</scope>
    <scope>SUBCELLULAR LOCATION</scope>
    <scope>MASS SPECTROMETRY</scope>
    <scope>TOPOLOGY</scope>
    <source>
        <strain>NIES-2133 / IAM M-273 / BP-1</strain>
    </source>
</reference>
<accession>P0A446</accession>
<accession>P35877</accession>
<name>PSBA2_THEVB</name>
<protein>
    <recommendedName>
        <fullName evidence="1">Photosystem II protein D1 2</fullName>
        <shortName evidence="1">PSII D1 protein 2</shortName>
        <ecNumber evidence="1">1.10.3.9</ecNumber>
    </recommendedName>
    <alternativeName>
        <fullName evidence="1">Photosystem II Q(B) protein 2</fullName>
    </alternativeName>
</protein>
<feature type="initiator methionine" description="Removed" evidence="3">
    <location>
        <position position="1"/>
    </location>
</feature>
<feature type="chain" id="PRO_0000090487" description="Photosystem II protein D1 2" evidence="1">
    <location>
        <begin position="2"/>
        <end position="344"/>
    </location>
</feature>
<feature type="propeptide" id="PRO_0000316377" evidence="1">
    <location>
        <begin position="345"/>
        <end position="360"/>
    </location>
</feature>
<feature type="transmembrane region" description="Helical" evidence="1">
    <location>
        <begin position="29"/>
        <end position="46"/>
    </location>
</feature>
<feature type="transmembrane region" description="Helical" evidence="1">
    <location>
        <begin position="118"/>
        <end position="133"/>
    </location>
</feature>
<feature type="transmembrane region" description="Helical" evidence="1">
    <location>
        <begin position="142"/>
        <end position="156"/>
    </location>
</feature>
<feature type="transmembrane region" description="Helical" evidence="1">
    <location>
        <begin position="197"/>
        <end position="218"/>
    </location>
</feature>
<feature type="transmembrane region" description="Helical" evidence="1">
    <location>
        <begin position="274"/>
        <end position="288"/>
    </location>
</feature>
<feature type="binding site" description="axial binding residue" evidence="1">
    <location>
        <position position="118"/>
    </location>
    <ligand>
        <name>chlorophyll a</name>
        <dbReference type="ChEBI" id="CHEBI:58416"/>
        <label>ChlzD1</label>
    </ligand>
    <ligandPart>
        <name>Mg</name>
        <dbReference type="ChEBI" id="CHEBI:25107"/>
    </ligandPart>
</feature>
<feature type="binding site" evidence="1">
    <location>
        <position position="126"/>
    </location>
    <ligand>
        <name>pheophytin a</name>
        <dbReference type="ChEBI" id="CHEBI:136840"/>
        <label>D1</label>
    </ligand>
</feature>
<feature type="binding site" evidence="1">
    <location>
        <position position="170"/>
    </location>
    <ligand>
        <name>[CaMn4O5] cluster</name>
        <dbReference type="ChEBI" id="CHEBI:189552"/>
    </ligand>
</feature>
<feature type="binding site" evidence="1">
    <location>
        <position position="189"/>
    </location>
    <ligand>
        <name>[CaMn4O5] cluster</name>
        <dbReference type="ChEBI" id="CHEBI:189552"/>
    </ligand>
</feature>
<feature type="binding site" description="axial binding residue" evidence="1">
    <location>
        <position position="198"/>
    </location>
    <ligand>
        <name>chlorophyll a</name>
        <dbReference type="ChEBI" id="CHEBI:58416"/>
        <label>PD1</label>
    </ligand>
    <ligandPart>
        <name>Mg</name>
        <dbReference type="ChEBI" id="CHEBI:25107"/>
    </ligandPart>
</feature>
<feature type="binding site" evidence="1">
    <location>
        <position position="215"/>
    </location>
    <ligand>
        <name>a quinone</name>
        <dbReference type="ChEBI" id="CHEBI:132124"/>
        <label>B</label>
    </ligand>
</feature>
<feature type="binding site" evidence="1">
    <location>
        <position position="215"/>
    </location>
    <ligand>
        <name>Fe cation</name>
        <dbReference type="ChEBI" id="CHEBI:24875"/>
        <note>ligand shared with heterodimeric partner</note>
    </ligand>
</feature>
<feature type="binding site" evidence="1">
    <location>
        <begin position="264"/>
        <end position="265"/>
    </location>
    <ligand>
        <name>a quinone</name>
        <dbReference type="ChEBI" id="CHEBI:132124"/>
        <label>B</label>
    </ligand>
</feature>
<feature type="binding site" evidence="1">
    <location>
        <position position="272"/>
    </location>
    <ligand>
        <name>Fe cation</name>
        <dbReference type="ChEBI" id="CHEBI:24875"/>
        <note>ligand shared with heterodimeric partner</note>
    </ligand>
</feature>
<feature type="binding site" evidence="1">
    <location>
        <position position="332"/>
    </location>
    <ligand>
        <name>[CaMn4O5] cluster</name>
        <dbReference type="ChEBI" id="CHEBI:189552"/>
    </ligand>
</feature>
<feature type="binding site" evidence="1">
    <location>
        <position position="333"/>
    </location>
    <ligand>
        <name>[CaMn4O5] cluster</name>
        <dbReference type="ChEBI" id="CHEBI:189552"/>
    </ligand>
</feature>
<feature type="binding site" evidence="1">
    <location>
        <position position="342"/>
    </location>
    <ligand>
        <name>[CaMn4O5] cluster</name>
        <dbReference type="ChEBI" id="CHEBI:189552"/>
    </ligand>
</feature>
<feature type="binding site" evidence="1">
    <location>
        <position position="344"/>
    </location>
    <ligand>
        <name>[CaMn4O5] cluster</name>
        <dbReference type="ChEBI" id="CHEBI:189552"/>
    </ligand>
</feature>
<feature type="site" description="Tyrosine radical intermediate" evidence="1">
    <location>
        <position position="161"/>
    </location>
</feature>
<feature type="site" description="Stabilizes free radical intermediate" evidence="1">
    <location>
        <position position="190"/>
    </location>
</feature>
<feature type="site" description="Cleavage; by CtpA" evidence="1">
    <location>
        <begin position="344"/>
        <end position="345"/>
    </location>
</feature>
<feature type="helix" evidence="5">
    <location>
        <begin position="13"/>
        <end position="21"/>
    </location>
</feature>
<feature type="strand" evidence="5">
    <location>
        <begin position="26"/>
        <end position="28"/>
    </location>
</feature>
<feature type="helix" evidence="5">
    <location>
        <begin position="31"/>
        <end position="54"/>
    </location>
</feature>
<feature type="strand" evidence="5">
    <location>
        <begin position="62"/>
        <end position="64"/>
    </location>
</feature>
<feature type="helix" evidence="5">
    <location>
        <begin position="71"/>
        <end position="73"/>
    </location>
</feature>
<feature type="turn" evidence="5">
    <location>
        <begin position="77"/>
        <end position="79"/>
    </location>
</feature>
<feature type="turn" evidence="5">
    <location>
        <begin position="87"/>
        <end position="91"/>
    </location>
</feature>
<feature type="helix" evidence="5">
    <location>
        <begin position="96"/>
        <end position="98"/>
    </location>
</feature>
<feature type="helix" evidence="5">
    <location>
        <begin position="102"/>
        <end position="107"/>
    </location>
</feature>
<feature type="helix" evidence="5">
    <location>
        <begin position="110"/>
        <end position="136"/>
    </location>
</feature>
<feature type="helix" evidence="5">
    <location>
        <begin position="143"/>
        <end position="158"/>
    </location>
</feature>
<feature type="helix" evidence="5">
    <location>
        <begin position="160"/>
        <end position="165"/>
    </location>
</feature>
<feature type="helix" evidence="5">
    <location>
        <begin position="168"/>
        <end position="170"/>
    </location>
</feature>
<feature type="helix" evidence="5">
    <location>
        <begin position="176"/>
        <end position="190"/>
    </location>
</feature>
<feature type="helix" evidence="5">
    <location>
        <begin position="192"/>
        <end position="194"/>
    </location>
</feature>
<feature type="helix" evidence="5">
    <location>
        <begin position="196"/>
        <end position="221"/>
    </location>
</feature>
<feature type="strand" evidence="5">
    <location>
        <begin position="229"/>
        <end position="231"/>
    </location>
</feature>
<feature type="helix" evidence="5">
    <location>
        <begin position="233"/>
        <end position="236"/>
    </location>
</feature>
<feature type="helix" evidence="5">
    <location>
        <begin position="248"/>
        <end position="258"/>
    </location>
</feature>
<feature type="helix" evidence="5">
    <location>
        <begin position="261"/>
        <end position="263"/>
    </location>
</feature>
<feature type="helix" evidence="5">
    <location>
        <begin position="268"/>
        <end position="293"/>
    </location>
</feature>
<feature type="turn" evidence="5">
    <location>
        <begin position="294"/>
        <end position="296"/>
    </location>
</feature>
<feature type="strand" evidence="5">
    <location>
        <begin position="297"/>
        <end position="299"/>
    </location>
</feature>
<feature type="helix" evidence="5">
    <location>
        <begin position="317"/>
        <end position="331"/>
    </location>
</feature>
<feature type="turn" evidence="5">
    <location>
        <begin position="332"/>
        <end position="336"/>
    </location>
</feature>
<organism>
    <name type="scientific">Thermosynechococcus vestitus (strain NIES-2133 / IAM M-273 / BP-1)</name>
    <dbReference type="NCBI Taxonomy" id="197221"/>
    <lineage>
        <taxon>Bacteria</taxon>
        <taxon>Bacillati</taxon>
        <taxon>Cyanobacteriota</taxon>
        <taxon>Cyanophyceae</taxon>
        <taxon>Acaryochloridales</taxon>
        <taxon>Thermosynechococcaceae</taxon>
        <taxon>Thermosynechococcus</taxon>
    </lineage>
</organism>
<dbReference type="EC" id="1.10.3.9" evidence="1"/>
<dbReference type="EMBL" id="BA000039">
    <property type="protein sequence ID" value="BAC09396.1"/>
    <property type="molecule type" value="Genomic_DNA"/>
</dbReference>
<dbReference type="RefSeq" id="NP_682634.1">
    <property type="nucleotide sequence ID" value="NC_004113.1"/>
</dbReference>
<dbReference type="RefSeq" id="WP_011057681.1">
    <property type="nucleotide sequence ID" value="NC_004113.1"/>
</dbReference>
<dbReference type="PDB" id="7YQ2">
    <property type="method" value="X-ray"/>
    <property type="resolution" value="1.90 A"/>
    <property type="chains" value="A/a=1-360"/>
</dbReference>
<dbReference type="PDBsum" id="7YQ2"/>
<dbReference type="SMR" id="P0A446"/>
<dbReference type="STRING" id="197221.gene:10748450"/>
<dbReference type="EnsemblBacteria" id="BAC09396">
    <property type="protein sequence ID" value="BAC09396"/>
    <property type="gene ID" value="BAC09396"/>
</dbReference>
<dbReference type="KEGG" id="tel:tlr1844"/>
<dbReference type="PATRIC" id="fig|197221.4.peg.1927"/>
<dbReference type="eggNOG" id="ENOG502Z87P">
    <property type="taxonomic scope" value="Bacteria"/>
</dbReference>
<dbReference type="BRENDA" id="3.4.21.102">
    <property type="organism ID" value="7763"/>
</dbReference>
<dbReference type="Proteomes" id="UP000000440">
    <property type="component" value="Chromosome"/>
</dbReference>
<dbReference type="GO" id="GO:0009523">
    <property type="term" value="C:photosystem II"/>
    <property type="evidence" value="ECO:0007669"/>
    <property type="project" value="UniProtKB-KW"/>
</dbReference>
<dbReference type="GO" id="GO:0031676">
    <property type="term" value="C:plasma membrane-derived thylakoid membrane"/>
    <property type="evidence" value="ECO:0007669"/>
    <property type="project" value="UniProtKB-SubCell"/>
</dbReference>
<dbReference type="GO" id="GO:0016168">
    <property type="term" value="F:chlorophyll binding"/>
    <property type="evidence" value="ECO:0007669"/>
    <property type="project" value="UniProtKB-UniRule"/>
</dbReference>
<dbReference type="GO" id="GO:0045156">
    <property type="term" value="F:electron transporter, transferring electrons within the cyclic electron transport pathway of photosynthesis activity"/>
    <property type="evidence" value="ECO:0007669"/>
    <property type="project" value="InterPro"/>
</dbReference>
<dbReference type="GO" id="GO:0005506">
    <property type="term" value="F:iron ion binding"/>
    <property type="evidence" value="ECO:0007669"/>
    <property type="project" value="UniProtKB-UniRule"/>
</dbReference>
<dbReference type="GO" id="GO:0016682">
    <property type="term" value="F:oxidoreductase activity, acting on diphenols and related substances as donors, oxygen as acceptor"/>
    <property type="evidence" value="ECO:0007669"/>
    <property type="project" value="UniProtKB-UniRule"/>
</dbReference>
<dbReference type="GO" id="GO:0010242">
    <property type="term" value="F:oxygen evolving activity"/>
    <property type="evidence" value="ECO:0007669"/>
    <property type="project" value="UniProtKB-EC"/>
</dbReference>
<dbReference type="GO" id="GO:0009772">
    <property type="term" value="P:photosynthetic electron transport in photosystem II"/>
    <property type="evidence" value="ECO:0007669"/>
    <property type="project" value="InterPro"/>
</dbReference>
<dbReference type="GO" id="GO:0009635">
    <property type="term" value="P:response to herbicide"/>
    <property type="evidence" value="ECO:0007669"/>
    <property type="project" value="UniProtKB-KW"/>
</dbReference>
<dbReference type="CDD" id="cd09289">
    <property type="entry name" value="Photosystem-II_D1"/>
    <property type="match status" value="1"/>
</dbReference>
<dbReference type="FunFam" id="1.20.85.10:FF:000002">
    <property type="entry name" value="Photosystem II protein D1"/>
    <property type="match status" value="1"/>
</dbReference>
<dbReference type="Gene3D" id="1.20.85.10">
    <property type="entry name" value="Photosystem II protein D1-like"/>
    <property type="match status" value="2"/>
</dbReference>
<dbReference type="HAMAP" id="MF_01379">
    <property type="entry name" value="PSII_PsbA_D1"/>
    <property type="match status" value="1"/>
</dbReference>
<dbReference type="InterPro" id="IPR055266">
    <property type="entry name" value="D1/D2"/>
</dbReference>
<dbReference type="InterPro" id="IPR036854">
    <property type="entry name" value="Photo_II_D1/D2_sf"/>
</dbReference>
<dbReference type="InterPro" id="IPR000484">
    <property type="entry name" value="Photo_RC_L/M"/>
</dbReference>
<dbReference type="InterPro" id="IPR055265">
    <property type="entry name" value="Photo_RC_L/M_CS"/>
</dbReference>
<dbReference type="InterPro" id="IPR005867">
    <property type="entry name" value="PSII_D1"/>
</dbReference>
<dbReference type="NCBIfam" id="TIGR01151">
    <property type="entry name" value="psbA"/>
    <property type="match status" value="1"/>
</dbReference>
<dbReference type="PANTHER" id="PTHR33149:SF12">
    <property type="entry name" value="PHOTOSYSTEM II D2 PROTEIN"/>
    <property type="match status" value="1"/>
</dbReference>
<dbReference type="PANTHER" id="PTHR33149">
    <property type="entry name" value="PHOTOSYSTEM II PROTEIN D1"/>
    <property type="match status" value="1"/>
</dbReference>
<dbReference type="Pfam" id="PF00124">
    <property type="entry name" value="Photo_RC"/>
    <property type="match status" value="1"/>
</dbReference>
<dbReference type="PRINTS" id="PR00256">
    <property type="entry name" value="REACTNCENTRE"/>
</dbReference>
<dbReference type="SUPFAM" id="SSF81483">
    <property type="entry name" value="Bacterial photosystem II reaction centre, L and M subunits"/>
    <property type="match status" value="1"/>
</dbReference>
<dbReference type="PROSITE" id="PS00244">
    <property type="entry name" value="REACTION_CENTER"/>
    <property type="match status" value="1"/>
</dbReference>
<sequence>MTTVLQRRQTANLWERFCDWITSTENRLYIGWFGVIMIPTLLAATICFVIAFIAAPPVDIDGIREPVSGSLLYGNNIITAAVVPSSNAIGLHLYPIWDAASLDEWLYNGGPYQLIIFHFLIGIFCYMGREWELSYRLGMRPWIPVAFSAPVAAATAVLLIYPIGQGSFSDGLMLGISGTFNFMIVFQAEHNILMHPFHMLGVAGVFGGALFAAMHGSLVTSSLIRETTETESTNYGYKFGQEEETYNIVAAHGYFGRLIFQYASFNNSRSLHFFLAAWPVVGIWFAALGISTMAFNLNGFNFNHSVVDAQGNVINTWADIINRANIGIEVMHERNAHNFPLDLASGELAPVAMIAPSIEA</sequence>
<keyword id="KW-0002">3D-structure</keyword>
<keyword id="KW-0106">Calcium</keyword>
<keyword id="KW-0148">Chlorophyll</keyword>
<keyword id="KW-0157">Chromophore</keyword>
<keyword id="KW-0249">Electron transport</keyword>
<keyword id="KW-0359">Herbicide resistance</keyword>
<keyword id="KW-0408">Iron</keyword>
<keyword id="KW-0460">Magnesium</keyword>
<keyword id="KW-0464">Manganese</keyword>
<keyword id="KW-0472">Membrane</keyword>
<keyword id="KW-0479">Metal-binding</keyword>
<keyword id="KW-0560">Oxidoreductase</keyword>
<keyword id="KW-0602">Photosynthesis</keyword>
<keyword id="KW-0604">Photosystem II</keyword>
<keyword id="KW-1185">Reference proteome</keyword>
<keyword id="KW-0793">Thylakoid</keyword>
<keyword id="KW-0812">Transmembrane</keyword>
<keyword id="KW-1133">Transmembrane helix</keyword>
<keyword id="KW-0813">Transport</keyword>
<evidence type="ECO:0000255" key="1">
    <source>
        <dbReference type="HAMAP-Rule" id="MF_01379"/>
    </source>
</evidence>
<evidence type="ECO:0000269" key="2">
    <source>
    </source>
</evidence>
<evidence type="ECO:0000269" key="3">
    <source>
    </source>
</evidence>
<evidence type="ECO:0000305" key="4"/>
<evidence type="ECO:0007829" key="5">
    <source>
        <dbReference type="PDB" id="7YQ2"/>
    </source>
</evidence>
<proteinExistence type="evidence at protein level"/>